<sequence length="331" mass="36308">MKQTVYIASPESQQIHVWNLNHEGALTLTQVVDVPGQVQPMVVSPDKRYLYVGVRPEFRVLAYRIAPDDGALTFAAESALPGSPTHISTDHQGQFVFVGSYNAGNVSVTRLEDGLPVGVVDVVEGLDGCHSANISPDNRTLWVPALKQDRICLFTVSDDGHLVAQDPAEVTTVEGAGPRHMVFHPNEQYAYCVNELNSSVDVWELKDPHGNIECVQTLDMMPENFSDTRWAADIHITPDGRHLYACDRTASLITVFSVSEDGSVLSKEGFQPTETQPRGFNVDHSGKYLIAAGQKSHHISVYEIVGEQGLLHEKGRYAVGQGPMWVVVNAH</sequence>
<evidence type="ECO:0000269" key="1">
    <source>
    </source>
</evidence>
<evidence type="ECO:0000269" key="2">
    <source>
    </source>
</evidence>
<evidence type="ECO:0000305" key="3"/>
<evidence type="ECO:0007829" key="4">
    <source>
        <dbReference type="PDB" id="1RI6"/>
    </source>
</evidence>
<keyword id="KW-0002">3D-structure</keyword>
<keyword id="KW-0007">Acetylation</keyword>
<keyword id="KW-0119">Carbohydrate metabolism</keyword>
<keyword id="KW-0313">Glucose metabolism</keyword>
<keyword id="KW-0378">Hydrolase</keyword>
<keyword id="KW-1185">Reference proteome</keyword>
<gene>
    <name type="primary">pgl</name>
    <name type="synonym">ybhE</name>
    <name type="ordered locus">b0767</name>
    <name type="ordered locus">JW0750</name>
</gene>
<dbReference type="EC" id="3.1.1.31"/>
<dbReference type="EMBL" id="U27192">
    <property type="status" value="NOT_ANNOTATED_CDS"/>
    <property type="molecule type" value="Genomic_DNA"/>
</dbReference>
<dbReference type="EMBL" id="U00096">
    <property type="protein sequence ID" value="AAC73854.1"/>
    <property type="molecule type" value="Genomic_DNA"/>
</dbReference>
<dbReference type="EMBL" id="AP009048">
    <property type="protein sequence ID" value="BAA35431.1"/>
    <property type="molecule type" value="Genomic_DNA"/>
</dbReference>
<dbReference type="PIR" id="G64812">
    <property type="entry name" value="G64812"/>
</dbReference>
<dbReference type="RefSeq" id="NP_415288.1">
    <property type="nucleotide sequence ID" value="NC_000913.3"/>
</dbReference>
<dbReference type="RefSeq" id="WP_000815435.1">
    <property type="nucleotide sequence ID" value="NZ_SSZK01000002.1"/>
</dbReference>
<dbReference type="PDB" id="1RI6">
    <property type="method" value="X-ray"/>
    <property type="resolution" value="2.00 A"/>
    <property type="chains" value="A=2-331"/>
</dbReference>
<dbReference type="PDBsum" id="1RI6"/>
<dbReference type="SMR" id="P52697"/>
<dbReference type="BioGRID" id="4261151">
    <property type="interactions" value="23"/>
</dbReference>
<dbReference type="FunCoup" id="P52697">
    <property type="interactions" value="243"/>
</dbReference>
<dbReference type="IntAct" id="P52697">
    <property type="interactions" value="5"/>
</dbReference>
<dbReference type="STRING" id="511145.b0767"/>
<dbReference type="iPTMnet" id="P52697"/>
<dbReference type="jPOST" id="P52697"/>
<dbReference type="PaxDb" id="511145-b0767"/>
<dbReference type="EnsemblBacteria" id="AAC73854">
    <property type="protein sequence ID" value="AAC73854"/>
    <property type="gene ID" value="b0767"/>
</dbReference>
<dbReference type="GeneID" id="86945650"/>
<dbReference type="GeneID" id="946398"/>
<dbReference type="KEGG" id="ecj:JW0750"/>
<dbReference type="KEGG" id="eco:b0767"/>
<dbReference type="KEGG" id="ecoc:C3026_03890"/>
<dbReference type="PATRIC" id="fig|1411691.4.peg.1511"/>
<dbReference type="EchoBASE" id="EB3020"/>
<dbReference type="eggNOG" id="COG2706">
    <property type="taxonomic scope" value="Bacteria"/>
</dbReference>
<dbReference type="HOGENOM" id="CLU_038716_2_0_6"/>
<dbReference type="InParanoid" id="P52697"/>
<dbReference type="OMA" id="NKEFIGY"/>
<dbReference type="OrthoDB" id="9790815at2"/>
<dbReference type="PhylomeDB" id="P52697"/>
<dbReference type="BioCyc" id="EcoCyc:6PGLUCONOLACT-MONOMER"/>
<dbReference type="BioCyc" id="MetaCyc:6PGLUCONOLACT-MONOMER"/>
<dbReference type="UniPathway" id="UPA00115">
    <property type="reaction ID" value="UER00409"/>
</dbReference>
<dbReference type="EvolutionaryTrace" id="P52697"/>
<dbReference type="PRO" id="PR:P52697"/>
<dbReference type="Proteomes" id="UP000000625">
    <property type="component" value="Chromosome"/>
</dbReference>
<dbReference type="GO" id="GO:0005829">
    <property type="term" value="C:cytosol"/>
    <property type="evidence" value="ECO:0000314"/>
    <property type="project" value="EcoCyc"/>
</dbReference>
<dbReference type="GO" id="GO:0017057">
    <property type="term" value="F:6-phosphogluconolactonase activity"/>
    <property type="evidence" value="ECO:0000314"/>
    <property type="project" value="EcoCyc"/>
</dbReference>
<dbReference type="GO" id="GO:0006006">
    <property type="term" value="P:glucose metabolic process"/>
    <property type="evidence" value="ECO:0007669"/>
    <property type="project" value="UniProtKB-KW"/>
</dbReference>
<dbReference type="GO" id="GO:0006098">
    <property type="term" value="P:pentose-phosphate shunt"/>
    <property type="evidence" value="ECO:0000269"/>
    <property type="project" value="EcoCyc"/>
</dbReference>
<dbReference type="GO" id="GO:0009051">
    <property type="term" value="P:pentose-phosphate shunt, oxidative branch"/>
    <property type="evidence" value="ECO:0007669"/>
    <property type="project" value="UniProtKB-UniRule"/>
</dbReference>
<dbReference type="FunFam" id="2.130.10.10:FF:000051">
    <property type="entry name" value="6-phosphogluconolactonase"/>
    <property type="match status" value="1"/>
</dbReference>
<dbReference type="Gene3D" id="2.130.10.10">
    <property type="entry name" value="YVTN repeat-like/Quinoprotein amine dehydrogenase"/>
    <property type="match status" value="1"/>
</dbReference>
<dbReference type="HAMAP" id="MF_01605">
    <property type="entry name" value="6P_gluconolactonase"/>
    <property type="match status" value="1"/>
</dbReference>
<dbReference type="InterPro" id="IPR022528">
    <property type="entry name" value="6-phosphogluconolactonase_YbhE"/>
</dbReference>
<dbReference type="InterPro" id="IPR050282">
    <property type="entry name" value="Cycloisomerase_2"/>
</dbReference>
<dbReference type="InterPro" id="IPR019405">
    <property type="entry name" value="Lactonase_7-beta_prop"/>
</dbReference>
<dbReference type="InterPro" id="IPR011045">
    <property type="entry name" value="N2O_reductase_N"/>
</dbReference>
<dbReference type="InterPro" id="IPR015943">
    <property type="entry name" value="WD40/YVTN_repeat-like_dom_sf"/>
</dbReference>
<dbReference type="NCBIfam" id="NF008258">
    <property type="entry name" value="PRK11028.1"/>
    <property type="match status" value="1"/>
</dbReference>
<dbReference type="PANTHER" id="PTHR30344:SF1">
    <property type="entry name" value="6-PHOSPHOGLUCONOLACTONASE"/>
    <property type="match status" value="1"/>
</dbReference>
<dbReference type="PANTHER" id="PTHR30344">
    <property type="entry name" value="6-PHOSPHOGLUCONOLACTONASE-RELATED"/>
    <property type="match status" value="1"/>
</dbReference>
<dbReference type="Pfam" id="PF10282">
    <property type="entry name" value="Lactonase"/>
    <property type="match status" value="1"/>
</dbReference>
<dbReference type="SUPFAM" id="SSF50974">
    <property type="entry name" value="Nitrous oxide reductase, N-terminal domain"/>
    <property type="match status" value="1"/>
</dbReference>
<protein>
    <recommendedName>
        <fullName>6-phosphogluconolactonase</fullName>
        <shortName>6-P-gluconolactonase</shortName>
        <shortName>Pgl</shortName>
        <ecNumber>3.1.1.31</ecNumber>
    </recommendedName>
</protein>
<proteinExistence type="evidence at protein level"/>
<feature type="chain" id="PRO_0000171132" description="6-phosphogluconolactonase">
    <location>
        <begin position="1"/>
        <end position="331"/>
    </location>
</feature>
<feature type="modified residue" description="N6-acetyllysine" evidence="2">
    <location>
        <position position="287"/>
    </location>
</feature>
<feature type="sequence conflict" description="In Ref. 1." evidence="3" ref="1">
    <original>QVQPMVVSPDKRYLYV</original>
    <variation>RCSRWWSARTNVISML</variation>
    <location>
        <begin position="37"/>
        <end position="52"/>
    </location>
</feature>
<feature type="sequence conflict" description="In Ref. 1." evidence="3" ref="1">
    <original>VGQGPMWVVVNAH</original>
    <variation>SGRDQCGWWLTHTKR</variation>
    <location>
        <begin position="319"/>
        <end position="331"/>
    </location>
</feature>
<feature type="strand" evidence="4">
    <location>
        <begin position="2"/>
        <end position="9"/>
    </location>
</feature>
<feature type="helix" evidence="4">
    <location>
        <begin position="10"/>
        <end position="12"/>
    </location>
</feature>
<feature type="strand" evidence="4">
    <location>
        <begin position="14"/>
        <end position="20"/>
    </location>
</feature>
<feature type="strand" evidence="4">
    <location>
        <begin position="26"/>
        <end position="33"/>
    </location>
</feature>
<feature type="strand" evidence="4">
    <location>
        <begin position="41"/>
        <end position="43"/>
    </location>
</feature>
<feature type="strand" evidence="4">
    <location>
        <begin position="47"/>
        <end position="54"/>
    </location>
</feature>
<feature type="turn" evidence="4">
    <location>
        <begin position="55"/>
        <end position="58"/>
    </location>
</feature>
<feature type="strand" evidence="4">
    <location>
        <begin position="59"/>
        <end position="65"/>
    </location>
</feature>
<feature type="turn" evidence="4">
    <location>
        <begin position="67"/>
        <end position="69"/>
    </location>
</feature>
<feature type="strand" evidence="4">
    <location>
        <begin position="72"/>
        <end position="79"/>
    </location>
</feature>
<feature type="strand" evidence="4">
    <location>
        <begin position="85"/>
        <end position="89"/>
    </location>
</feature>
<feature type="strand" evidence="4">
    <location>
        <begin position="93"/>
        <end position="100"/>
    </location>
</feature>
<feature type="turn" evidence="4">
    <location>
        <begin position="101"/>
        <end position="104"/>
    </location>
</feature>
<feature type="strand" evidence="4">
    <location>
        <begin position="105"/>
        <end position="112"/>
    </location>
</feature>
<feature type="strand" evidence="4">
    <location>
        <begin position="115"/>
        <end position="123"/>
    </location>
</feature>
<feature type="strand" evidence="4">
    <location>
        <begin position="138"/>
        <end position="145"/>
    </location>
</feature>
<feature type="helix" evidence="4">
    <location>
        <begin position="146"/>
        <end position="148"/>
    </location>
</feature>
<feature type="strand" evidence="4">
    <location>
        <begin position="150"/>
        <end position="156"/>
    </location>
</feature>
<feature type="strand" evidence="4">
    <location>
        <begin position="162"/>
        <end position="171"/>
    </location>
</feature>
<feature type="strand" evidence="4">
    <location>
        <begin position="178"/>
        <end position="183"/>
    </location>
</feature>
<feature type="strand" evidence="4">
    <location>
        <begin position="187"/>
        <end position="194"/>
    </location>
</feature>
<feature type="turn" evidence="4">
    <location>
        <begin position="195"/>
        <end position="198"/>
    </location>
</feature>
<feature type="strand" evidence="4">
    <location>
        <begin position="199"/>
        <end position="206"/>
    </location>
</feature>
<feature type="strand" evidence="4">
    <location>
        <begin position="213"/>
        <end position="219"/>
    </location>
</feature>
<feature type="strand" evidence="4">
    <location>
        <begin position="231"/>
        <end position="236"/>
    </location>
</feature>
<feature type="strand" evidence="4">
    <location>
        <begin position="240"/>
        <end position="247"/>
    </location>
</feature>
<feature type="turn" evidence="4">
    <location>
        <begin position="248"/>
        <end position="251"/>
    </location>
</feature>
<feature type="strand" evidence="4">
    <location>
        <begin position="252"/>
        <end position="258"/>
    </location>
</feature>
<feature type="strand" evidence="4">
    <location>
        <begin position="265"/>
        <end position="272"/>
    </location>
</feature>
<feature type="strand" evidence="4">
    <location>
        <begin position="274"/>
        <end position="276"/>
    </location>
</feature>
<feature type="strand" evidence="4">
    <location>
        <begin position="280"/>
        <end position="282"/>
    </location>
</feature>
<feature type="strand" evidence="4">
    <location>
        <begin position="286"/>
        <end position="292"/>
    </location>
</feature>
<feature type="turn" evidence="4">
    <location>
        <begin position="294"/>
        <end position="296"/>
    </location>
</feature>
<feature type="strand" evidence="4">
    <location>
        <begin position="298"/>
        <end position="305"/>
    </location>
</feature>
<feature type="turn" evidence="4">
    <location>
        <begin position="306"/>
        <end position="309"/>
    </location>
</feature>
<feature type="strand" evidence="4">
    <location>
        <begin position="310"/>
        <end position="318"/>
    </location>
</feature>
<feature type="strand" evidence="4">
    <location>
        <begin position="320"/>
        <end position="322"/>
    </location>
</feature>
<feature type="strand" evidence="4">
    <location>
        <begin position="325"/>
        <end position="331"/>
    </location>
</feature>
<name>6PGL_ECOLI</name>
<organism>
    <name type="scientific">Escherichia coli (strain K12)</name>
    <dbReference type="NCBI Taxonomy" id="83333"/>
    <lineage>
        <taxon>Bacteria</taxon>
        <taxon>Pseudomonadati</taxon>
        <taxon>Pseudomonadota</taxon>
        <taxon>Gammaproteobacteria</taxon>
        <taxon>Enterobacterales</taxon>
        <taxon>Enterobacteriaceae</taxon>
        <taxon>Escherichia</taxon>
    </lineage>
</organism>
<reference key="1">
    <citation type="journal article" date="1995" name="J. Bacteriol.">
        <title>Genetic analysis of the modABCD (molybdate transport) operon of Escherichia coli.</title>
        <authorList>
            <person name="Maupin-Furlow J.A."/>
            <person name="Rosentel J.K."/>
            <person name="Lee J.H."/>
            <person name="Deppenmeier U."/>
            <person name="Gunsalus R.P."/>
            <person name="Shanmugam K.T."/>
        </authorList>
    </citation>
    <scope>NUCLEOTIDE SEQUENCE [GENOMIC DNA]</scope>
    <source>
        <strain>K12</strain>
    </source>
</reference>
<reference key="2">
    <citation type="journal article" date="1996" name="DNA Res.">
        <title>A 718-kb DNA sequence of the Escherichia coli K-12 genome corresponding to the 12.7-28.0 min region on the linkage map.</title>
        <authorList>
            <person name="Oshima T."/>
            <person name="Aiba H."/>
            <person name="Baba T."/>
            <person name="Fujita K."/>
            <person name="Hayashi K."/>
            <person name="Honjo A."/>
            <person name="Ikemoto K."/>
            <person name="Inada T."/>
            <person name="Itoh T."/>
            <person name="Kajihara M."/>
            <person name="Kanai K."/>
            <person name="Kashimoto K."/>
            <person name="Kimura S."/>
            <person name="Kitagawa M."/>
            <person name="Makino K."/>
            <person name="Masuda S."/>
            <person name="Miki T."/>
            <person name="Mizobuchi K."/>
            <person name="Mori H."/>
            <person name="Motomura K."/>
            <person name="Nakamura Y."/>
            <person name="Nashimoto H."/>
            <person name="Nishio Y."/>
            <person name="Saito N."/>
            <person name="Sampei G."/>
            <person name="Seki Y."/>
            <person name="Tagami H."/>
            <person name="Takemoto K."/>
            <person name="Wada C."/>
            <person name="Yamamoto Y."/>
            <person name="Yano M."/>
            <person name="Horiuchi T."/>
        </authorList>
    </citation>
    <scope>NUCLEOTIDE SEQUENCE [LARGE SCALE GENOMIC DNA]</scope>
    <source>
        <strain>K12 / W3110 / ATCC 27325 / DSM 5911</strain>
    </source>
</reference>
<reference key="3">
    <citation type="journal article" date="1997" name="Science">
        <title>The complete genome sequence of Escherichia coli K-12.</title>
        <authorList>
            <person name="Blattner F.R."/>
            <person name="Plunkett G. III"/>
            <person name="Bloch C.A."/>
            <person name="Perna N.T."/>
            <person name="Burland V."/>
            <person name="Riley M."/>
            <person name="Collado-Vides J."/>
            <person name="Glasner J.D."/>
            <person name="Rode C.K."/>
            <person name="Mayhew G.F."/>
            <person name="Gregor J."/>
            <person name="Davis N.W."/>
            <person name="Kirkpatrick H.A."/>
            <person name="Goeden M.A."/>
            <person name="Rose D.J."/>
            <person name="Mau B."/>
            <person name="Shao Y."/>
        </authorList>
    </citation>
    <scope>NUCLEOTIDE SEQUENCE [LARGE SCALE GENOMIC DNA]</scope>
    <source>
        <strain>K12 / MG1655 / ATCC 47076</strain>
    </source>
</reference>
<reference key="4">
    <citation type="journal article" date="2006" name="Mol. Syst. Biol.">
        <title>Highly accurate genome sequences of Escherichia coli K-12 strains MG1655 and W3110.</title>
        <authorList>
            <person name="Hayashi K."/>
            <person name="Morooka N."/>
            <person name="Yamamoto Y."/>
            <person name="Fujita K."/>
            <person name="Isono K."/>
            <person name="Choi S."/>
            <person name="Ohtsubo E."/>
            <person name="Baba T."/>
            <person name="Wanner B.L."/>
            <person name="Mori H."/>
            <person name="Horiuchi T."/>
        </authorList>
    </citation>
    <scope>NUCLEOTIDE SEQUENCE [LARGE SCALE GENOMIC DNA]</scope>
    <source>
        <strain>K12 / W3110 / ATCC 27325 / DSM 5911</strain>
    </source>
</reference>
<reference key="5">
    <citation type="unpublished observations" date="1996-03">
        <authorList>
            <person name="Rudd K.E."/>
        </authorList>
    </citation>
    <scope>IDENTIFICATION</scope>
</reference>
<reference key="6">
    <citation type="journal article" date="2004" name="J. Bacteriol.">
        <title>Identification of the Escherichia coli K-12 ybhE gene as pgl, encoding 6-phosphogluconolactonase.</title>
        <authorList>
            <person name="Thomason L.C."/>
            <person name="Court D.L."/>
            <person name="Datta A.R."/>
            <person name="Khanna R."/>
            <person name="Rosner J.L."/>
        </authorList>
    </citation>
    <scope>FUNCTION</scope>
    <source>
        <strain>K12 / MG1655 / ATCC 47076</strain>
    </source>
</reference>
<reference key="7">
    <citation type="journal article" date="2009" name="Mol. Cell. Proteomics">
        <title>Lysine acetylation is a highly abundant and evolutionarily conserved modification in Escherichia coli.</title>
        <authorList>
            <person name="Zhang J."/>
            <person name="Sprung R."/>
            <person name="Pei J."/>
            <person name="Tan X."/>
            <person name="Kim S."/>
            <person name="Zhu H."/>
            <person name="Liu C.F."/>
            <person name="Grishin N.V."/>
            <person name="Zhao Y."/>
        </authorList>
    </citation>
    <scope>ACETYLATION [LARGE SCALE ANALYSIS] AT LYS-287</scope>
    <scope>IDENTIFICATION BY MASS SPECTROMETRY</scope>
    <source>
        <strain>K12 / JW1106</strain>
        <strain>K12 / MG1655 / ATCC 47076</strain>
    </source>
</reference>
<reference key="8">
    <citation type="submission" date="2003-11" db="PDB data bank">
        <title>Structure of a putative 7-bladed propeller isomerase.</title>
        <authorList>
            <person name="Lima C.D."/>
            <person name="Kniewel R."/>
            <person name="Solorzano V."/>
            <person name="Wu J."/>
        </authorList>
    </citation>
    <scope>X-RAY CRYSTALLOGRAPHY (2.0 ANGSTROMS)</scope>
</reference>
<accession>P52697</accession>
<accession>P75760</accession>
<comment type="function">
    <text evidence="1">Catalyzes the hydrolysis of 6-phosphogluconolactone to 6-phosphogluconate.</text>
</comment>
<comment type="catalytic activity">
    <reaction>
        <text>6-phospho-D-glucono-1,5-lactone + H2O = 6-phospho-D-gluconate + H(+)</text>
        <dbReference type="Rhea" id="RHEA:12556"/>
        <dbReference type="ChEBI" id="CHEBI:15377"/>
        <dbReference type="ChEBI" id="CHEBI:15378"/>
        <dbReference type="ChEBI" id="CHEBI:57955"/>
        <dbReference type="ChEBI" id="CHEBI:58759"/>
        <dbReference type="EC" id="3.1.1.31"/>
    </reaction>
</comment>
<comment type="pathway">
    <text>Carbohydrate degradation; pentose phosphate pathway; D-ribulose 5-phosphate from D-glucose 6-phosphate (oxidative stage): step 2/3.</text>
</comment>
<comment type="similarity">
    <text evidence="3">Belongs to the cycloisomerase 2 family.</text>
</comment>
<comment type="sequence caution" evidence="3">
    <conflict type="frameshift">
        <sequence resource="EMBL" id="U27192"/>
    </conflict>
</comment>